<keyword id="KW-0068">Autocatalytic cleavage</keyword>
<keyword id="KW-0106">Calcium</keyword>
<keyword id="KW-0967">Endosome</keyword>
<keyword id="KW-0378">Hydrolase</keyword>
<keyword id="KW-0479">Metal-binding</keyword>
<keyword id="KW-0645">Protease</keyword>
<keyword id="KW-0788">Thiol protease</keyword>
<keyword id="KW-0865">Zymogen</keyword>
<accession>Q8T8E6</accession>
<protein>
    <recommendedName>
        <fullName evidence="7">Metacaspase-3</fullName>
        <ecNumber evidence="5">3.4.22.-</ecNumber>
    </recommendedName>
    <alternativeName>
        <fullName evidence="6">TbMCA3</fullName>
    </alternativeName>
    <component>
        <recommendedName>
            <fullName evidence="7">Large subunit p20</fullName>
        </recommendedName>
    </component>
    <component>
        <recommendedName>
            <fullName evidence="7">Small subunit p10</fullName>
        </recommendedName>
    </component>
</protein>
<name>MCA3_TRYBB</name>
<organism>
    <name type="scientific">Trypanosoma brucei brucei</name>
    <dbReference type="NCBI Taxonomy" id="5702"/>
    <lineage>
        <taxon>Eukaryota</taxon>
        <taxon>Discoba</taxon>
        <taxon>Euglenozoa</taxon>
        <taxon>Kinetoplastea</taxon>
        <taxon>Metakinetoplastina</taxon>
        <taxon>Trypanosomatida</taxon>
        <taxon>Trypanosomatidae</taxon>
        <taxon>Trypanosoma</taxon>
    </lineage>
</organism>
<evidence type="ECO:0000250" key="1">
    <source>
        <dbReference type="UniProtKB" id="Q08601"/>
    </source>
</evidence>
<evidence type="ECO:0000250" key="2">
    <source>
        <dbReference type="UniProtKB" id="Q585F3"/>
    </source>
</evidence>
<evidence type="ECO:0000250" key="3">
    <source>
        <dbReference type="UniProtKB" id="Q8T8E7"/>
    </source>
</evidence>
<evidence type="ECO:0000269" key="4">
    <source>
    </source>
</evidence>
<evidence type="ECO:0000269" key="5">
    <source>
    </source>
</evidence>
<evidence type="ECO:0000303" key="6">
    <source>
    </source>
</evidence>
<evidence type="ECO:0000305" key="7"/>
<evidence type="ECO:0000305" key="8">
    <source>
    </source>
</evidence>
<evidence type="ECO:0000305" key="9">
    <source>
    </source>
</evidence>
<evidence type="ECO:0000312" key="10">
    <source>
        <dbReference type="EMBL" id="CAD24804.1"/>
    </source>
</evidence>
<reference evidence="10" key="1">
    <citation type="journal article" date="2002" name="FEBS Lett.">
        <title>A metacaspase of Trypanosoma brucei causes loss of respiration competence and clonal death in the yeast Saccharomyces cerevisiae.</title>
        <authorList>
            <person name="Szallies A."/>
            <person name="Kubata B.K."/>
            <person name="Duszenko M."/>
        </authorList>
    </citation>
    <scope>NUCLEOTIDE SEQUENCE [MRNA]</scope>
</reference>
<reference evidence="7" key="2">
    <citation type="journal article" date="2006" name="J. Cell Sci.">
        <title>Bloodstream form Trypanosoma brucei depend upon multiple metacaspases associated with RAB11-positive endosomes.</title>
        <authorList>
            <person name="Helms M.J."/>
            <person name="Ambit A."/>
            <person name="Appleton P."/>
            <person name="Tetley L."/>
            <person name="Coombs G.H."/>
            <person name="Mottram J.C."/>
        </authorList>
    </citation>
    <scope>SUBCELLULAR LOCATION</scope>
    <scope>DEVELOPMENTAL STAGE</scope>
    <scope>DISRUPTION PHENOTYPE</scope>
    <source>
        <strain evidence="4">EATRO 795</strain>
    </source>
</reference>
<reference evidence="7" key="3">
    <citation type="journal article" date="2011" name="J. Biol. Chem.">
        <title>Trypanosoma brucei metacaspase 4 is a pseudopeptidase and a virulence factor.</title>
        <authorList>
            <person name="Proto W.R."/>
            <person name="Castanys-Munoz E."/>
            <person name="Black A."/>
            <person name="Tetley L."/>
            <person name="Moss C.X."/>
            <person name="Juliano L."/>
            <person name="Coombs G.H."/>
            <person name="Mottram J.C."/>
        </authorList>
    </citation>
    <scope>FUNCTION</scope>
    <scope>CATALYTIC ACTIVITY</scope>
    <scope>ACTIVITY REGULATION</scope>
    <scope>PROTEOLYTIC CLEAVAGE</scope>
</reference>
<comment type="function">
    <text evidence="5">Cysteine protease that cleaves specifically after arginine or lysine residues (PubMed:21949125). In the bloodstream form, may cleave inactive metacaspase-4 MCA4 prior to MCA4 secretion (PubMed:21949125).</text>
</comment>
<comment type="activity regulation">
    <text evidence="9">Activated by Ca(2+).</text>
</comment>
<comment type="subcellular location">
    <subcellularLocation>
        <location evidence="8">Recycling endosome</location>
    </subcellularLocation>
</comment>
<comment type="developmental stage">
    <text evidence="4">Specifically expressed in the mammalian blood stage form (at protein level).</text>
</comment>
<comment type="disruption phenotype">
    <text evidence="4">RNAi-mediated knockdown causes no defect in the growth of the bloodstream stage form (PubMed:16507595). Simultaneous RNAi-mediated knockdown of MCA2, MCA3 and MCA5 in the bloodstream stage form causes a growth arrest resulting from a block prior to cytokinesis; DNA replication and mitosis are normal (PubMed:16507595). Has no effect on VSG protein recycling (PubMed:16507595). Triple knockout of MCA2, MCA3 and MCA5 in the bloodstream form causes an initial slower growth rate in vitro which reaches wild-type levels after several weeks of culture (PubMed:16507595). Triple knockouts have a normal growth rate and virulence in infected mice (PubMed:16507595).</text>
</comment>
<comment type="similarity">
    <text evidence="7">Belongs to the peptidase C14B family.</text>
</comment>
<sequence length="357" mass="38724">MAVDPRCLLSLCSTISKASSAKGTNDFVKIGMELWQTAQPYLVQALGLQPPPPKVDVDAAVANAGDAHGEQPWVATPLPGQTVRALFIGINYYGTSAALSGCCNDVKQMLATLQKKGLPINEAVILVDEDNFPGRTDQPTRDNIVRYMAWLVKDAKPGDVLFFHYSGHGTQCKSRGDSDEKYDQCIAPVDFQKSGCIVDDDIHKLLFSRLPEKVRLTAVFDCCHSGSIMDLPFTYVCSGGEQASGTPHMKRIREGNDVLGDVMMISGCADEQTSADVKNTATFGTGSTGAGGAATQCITCMLMNNQSLSYGKLLIETRDMLKRKRFKQVPQLSASKAIDLDQTFSLTEMFSVDRSVQ</sequence>
<proteinExistence type="evidence at protein level"/>
<dbReference type="EC" id="3.4.22.-" evidence="5"/>
<dbReference type="EMBL" id="AJ437303">
    <property type="protein sequence ID" value="CAD24804.1"/>
    <property type="molecule type" value="mRNA"/>
</dbReference>
<dbReference type="SMR" id="Q8T8E6"/>
<dbReference type="ChEMBL" id="CHEMBL1075156"/>
<dbReference type="MEROPS" id="C14.044"/>
<dbReference type="GO" id="GO:0055037">
    <property type="term" value="C:recycling endosome"/>
    <property type="evidence" value="ECO:0007669"/>
    <property type="project" value="UniProtKB-SubCell"/>
</dbReference>
<dbReference type="GO" id="GO:0004197">
    <property type="term" value="F:cysteine-type endopeptidase activity"/>
    <property type="evidence" value="ECO:0000314"/>
    <property type="project" value="UniProtKB"/>
</dbReference>
<dbReference type="GO" id="GO:0046872">
    <property type="term" value="F:metal ion binding"/>
    <property type="evidence" value="ECO:0007669"/>
    <property type="project" value="UniProtKB-KW"/>
</dbReference>
<dbReference type="GO" id="GO:0006508">
    <property type="term" value="P:proteolysis"/>
    <property type="evidence" value="ECO:0000314"/>
    <property type="project" value="UniProtKB"/>
</dbReference>
<dbReference type="FunFam" id="3.40.50.12660:FF:000003">
    <property type="entry name" value="Metacaspase MCA2"/>
    <property type="match status" value="1"/>
</dbReference>
<dbReference type="Gene3D" id="3.40.50.12660">
    <property type="match status" value="1"/>
</dbReference>
<dbReference type="InterPro" id="IPR029030">
    <property type="entry name" value="Caspase-like_dom_sf"/>
</dbReference>
<dbReference type="InterPro" id="IPR050452">
    <property type="entry name" value="Metacaspase"/>
</dbReference>
<dbReference type="InterPro" id="IPR011600">
    <property type="entry name" value="Pept_C14_caspase"/>
</dbReference>
<dbReference type="PANTHER" id="PTHR48104:SF30">
    <property type="entry name" value="METACASPASE-1"/>
    <property type="match status" value="1"/>
</dbReference>
<dbReference type="PANTHER" id="PTHR48104">
    <property type="entry name" value="METACASPASE-4"/>
    <property type="match status" value="1"/>
</dbReference>
<dbReference type="Pfam" id="PF00656">
    <property type="entry name" value="Peptidase_C14"/>
    <property type="match status" value="1"/>
</dbReference>
<dbReference type="SUPFAM" id="SSF52129">
    <property type="entry name" value="Caspase-like"/>
    <property type="match status" value="1"/>
</dbReference>
<feature type="chain" id="PRO_0000451282" description="Metacaspase-3">
    <location>
        <begin position="1"/>
        <end position="357"/>
    </location>
</feature>
<feature type="propeptide" id="PRO_0000451281" evidence="7">
    <location>
        <begin position="1"/>
        <end status="unknown"/>
    </location>
</feature>
<feature type="chain" id="PRO_0000451283" description="Large subunit p20" evidence="3">
    <location>
        <begin status="unknown"/>
        <end position="278"/>
    </location>
</feature>
<feature type="chain" id="PRO_0000451284" description="Small subunit p10" evidence="3">
    <location>
        <begin position="279"/>
        <end position="357"/>
    </location>
</feature>
<feature type="active site" evidence="1">
    <location>
        <position position="168"/>
    </location>
</feature>
<feature type="active site" evidence="3">
    <location>
        <position position="223"/>
    </location>
</feature>
<feature type="binding site" evidence="2">
    <location>
        <position position="183"/>
    </location>
    <ligand>
        <name>Ca(2+)</name>
        <dbReference type="ChEBI" id="CHEBI:29108"/>
    </ligand>
</feature>
<feature type="binding site" evidence="2">
    <location>
        <position position="199"/>
    </location>
    <ligand>
        <name>Ca(2+)</name>
        <dbReference type="ChEBI" id="CHEBI:29108"/>
    </ligand>
</feature>
<feature type="binding site" evidence="2">
    <location>
        <position position="200"/>
    </location>
    <ligand>
        <name>Ca(2+)</name>
        <dbReference type="ChEBI" id="CHEBI:29108"/>
    </ligand>
</feature>
<feature type="binding site" evidence="2">
    <location>
        <position position="230"/>
    </location>
    <ligand>
        <name>Ca(2+)</name>
        <dbReference type="ChEBI" id="CHEBI:29108"/>
    </ligand>
</feature>
<feature type="site" description="Cleavage; by autolysis" evidence="5">
    <location>
        <begin position="22"/>
        <end position="23"/>
    </location>
</feature>
<gene>
    <name evidence="6" type="primary">MCA3</name>
</gene>